<keyword id="KW-0028">Amino-acid biosynthesis</keyword>
<keyword id="KW-0057">Aromatic amino acid biosynthesis</keyword>
<keyword id="KW-0456">Lyase</keyword>
<keyword id="KW-0663">Pyridoxal phosphate</keyword>
<keyword id="KW-0822">Tryptophan biosynthesis</keyword>
<reference key="1">
    <citation type="journal article" date="2003" name="Mol. Microbiol.">
        <title>An integrated analysis of the genome of the hyperthermophilic archaeon Pyrococcus abyssi.</title>
        <authorList>
            <person name="Cohen G.N."/>
            <person name="Barbe V."/>
            <person name="Flament D."/>
            <person name="Galperin M."/>
            <person name="Heilig R."/>
            <person name="Lecompte O."/>
            <person name="Poch O."/>
            <person name="Prieur D."/>
            <person name="Querellou J."/>
            <person name="Ripp R."/>
            <person name="Thierry J.-C."/>
            <person name="Van der Oost J."/>
            <person name="Weissenbach J."/>
            <person name="Zivanovic Y."/>
            <person name="Forterre P."/>
        </authorList>
    </citation>
    <scope>NUCLEOTIDE SEQUENCE [LARGE SCALE GENOMIC DNA]</scope>
    <source>
        <strain>GE5 / Orsay</strain>
    </source>
</reference>
<reference key="2">
    <citation type="journal article" date="2012" name="Curr. Microbiol.">
        <title>Re-annotation of two hyperthermophilic archaea Pyrococcus abyssi GE5 and Pyrococcus furiosus DSM 3638.</title>
        <authorList>
            <person name="Gao J."/>
            <person name="Wang J."/>
        </authorList>
    </citation>
    <scope>GENOME REANNOTATION</scope>
    <source>
        <strain>GE5 / Orsay</strain>
    </source>
</reference>
<dbReference type="EC" id="4.2.1.20"/>
<dbReference type="EMBL" id="AJ248284">
    <property type="protein sequence ID" value="CAB49381.1"/>
    <property type="molecule type" value="Genomic_DNA"/>
</dbReference>
<dbReference type="EMBL" id="HE613800">
    <property type="protein sequence ID" value="CCE69842.1"/>
    <property type="molecule type" value="Genomic_DNA"/>
</dbReference>
<dbReference type="PIR" id="F75162">
    <property type="entry name" value="F75162"/>
</dbReference>
<dbReference type="RefSeq" id="WP_010867583.1">
    <property type="nucleotide sequence ID" value="NC_000868.1"/>
</dbReference>
<dbReference type="SMR" id="Q9V1G8"/>
<dbReference type="STRING" id="272844.PAB2048"/>
<dbReference type="KEGG" id="pab:PAB2048"/>
<dbReference type="PATRIC" id="fig|272844.11.peg.486"/>
<dbReference type="eggNOG" id="arCOG01433">
    <property type="taxonomic scope" value="Archaea"/>
</dbReference>
<dbReference type="HOGENOM" id="CLU_016734_3_1_2"/>
<dbReference type="OrthoDB" id="371827at2157"/>
<dbReference type="PhylomeDB" id="Q9V1G8"/>
<dbReference type="UniPathway" id="UPA00035">
    <property type="reaction ID" value="UER00044"/>
</dbReference>
<dbReference type="Proteomes" id="UP000000810">
    <property type="component" value="Chromosome"/>
</dbReference>
<dbReference type="Proteomes" id="UP000009139">
    <property type="component" value="Chromosome"/>
</dbReference>
<dbReference type="GO" id="GO:0005737">
    <property type="term" value="C:cytoplasm"/>
    <property type="evidence" value="ECO:0007669"/>
    <property type="project" value="TreeGrafter"/>
</dbReference>
<dbReference type="GO" id="GO:0004834">
    <property type="term" value="F:tryptophan synthase activity"/>
    <property type="evidence" value="ECO:0007669"/>
    <property type="project" value="UniProtKB-UniRule"/>
</dbReference>
<dbReference type="CDD" id="cd06446">
    <property type="entry name" value="Trp-synth_B"/>
    <property type="match status" value="1"/>
</dbReference>
<dbReference type="FunFam" id="3.40.50.1100:FF:000001">
    <property type="entry name" value="Tryptophan synthase beta chain"/>
    <property type="match status" value="1"/>
</dbReference>
<dbReference type="FunFam" id="3.40.50.1100:FF:000004">
    <property type="entry name" value="Tryptophan synthase beta chain"/>
    <property type="match status" value="1"/>
</dbReference>
<dbReference type="Gene3D" id="3.40.50.1100">
    <property type="match status" value="2"/>
</dbReference>
<dbReference type="HAMAP" id="MF_00133">
    <property type="entry name" value="Trp_synth_beta"/>
    <property type="match status" value="1"/>
</dbReference>
<dbReference type="InterPro" id="IPR006653">
    <property type="entry name" value="Trp_synth_b_CS"/>
</dbReference>
<dbReference type="InterPro" id="IPR006654">
    <property type="entry name" value="Trp_synth_beta"/>
</dbReference>
<dbReference type="InterPro" id="IPR023026">
    <property type="entry name" value="Trp_synth_beta/beta-like"/>
</dbReference>
<dbReference type="InterPro" id="IPR001926">
    <property type="entry name" value="TrpB-like_PALP"/>
</dbReference>
<dbReference type="InterPro" id="IPR036052">
    <property type="entry name" value="TrpB-like_PALP_sf"/>
</dbReference>
<dbReference type="NCBIfam" id="TIGR00263">
    <property type="entry name" value="trpB"/>
    <property type="match status" value="1"/>
</dbReference>
<dbReference type="PANTHER" id="PTHR48077:SF3">
    <property type="entry name" value="TRYPTOPHAN SYNTHASE"/>
    <property type="match status" value="1"/>
</dbReference>
<dbReference type="PANTHER" id="PTHR48077">
    <property type="entry name" value="TRYPTOPHAN SYNTHASE-RELATED"/>
    <property type="match status" value="1"/>
</dbReference>
<dbReference type="Pfam" id="PF00291">
    <property type="entry name" value="PALP"/>
    <property type="match status" value="1"/>
</dbReference>
<dbReference type="PIRSF" id="PIRSF001413">
    <property type="entry name" value="Trp_syn_beta"/>
    <property type="match status" value="1"/>
</dbReference>
<dbReference type="SUPFAM" id="SSF53686">
    <property type="entry name" value="Tryptophan synthase beta subunit-like PLP-dependent enzymes"/>
    <property type="match status" value="1"/>
</dbReference>
<dbReference type="PROSITE" id="PS00168">
    <property type="entry name" value="TRP_SYNTHASE_BETA"/>
    <property type="match status" value="1"/>
</dbReference>
<protein>
    <recommendedName>
        <fullName>Tryptophan synthase beta chain 1</fullName>
        <ecNumber>4.2.1.20</ecNumber>
    </recommendedName>
</protein>
<sequence>MWFGKFGGQYVPETLMEPLRELEKAYKRLKNDEEFNRQLDYYLRTWAGRPTPLYYAERLTKKVGGAKIYLKREDLLHGGAHKTNNAIGQALLAKFMGKTRLIAETGAGQHGVATAMAGALLGMKVDIYMGAEDVERQKMNVFRMKLLGANVIPVHTGSKTLKDAINEALRDWVATFEYSHYLIGSVVGPHPYPIIVRDFQSVIGREAREQILEAEGDLPDVIVACVGGGSNAMGIFYPFVKDKSVRLIGVEAGGKGIESGKHSASLNAGEIGVFHGMLSYFLQDEEGQIRTTHSIAPGLDYPGVGPEHAYLKESGRAEYVTVTDEEALRAFHELSRTEGIIPALESAHAVAYAIKLAREMSRDDVIIVNLSGRGDKDLDIVLKVSGNV</sequence>
<feature type="chain" id="PRO_0000099047" description="Tryptophan synthase beta chain 1">
    <location>
        <begin position="1"/>
        <end position="388"/>
    </location>
</feature>
<feature type="modified residue" description="N6-(pyridoxal phosphate)lysine" evidence="1">
    <location>
        <position position="82"/>
    </location>
</feature>
<evidence type="ECO:0000250" key="1"/>
<evidence type="ECO:0000305" key="2"/>
<name>TRPB1_PYRAB</name>
<gene>
    <name type="primary">trpB1</name>
    <name type="synonym">trpB-1</name>
    <name type="ordered locus">PYRAB04590</name>
    <name type="ORF">PAB2048</name>
</gene>
<accession>Q9V1G8</accession>
<accession>G8ZGG3</accession>
<comment type="function">
    <text evidence="1">The beta subunit is responsible for the synthesis of L-tryptophan from indole and L-serine.</text>
</comment>
<comment type="catalytic activity">
    <reaction>
        <text>(1S,2R)-1-C-(indol-3-yl)glycerol 3-phosphate + L-serine = D-glyceraldehyde 3-phosphate + L-tryptophan + H2O</text>
        <dbReference type="Rhea" id="RHEA:10532"/>
        <dbReference type="ChEBI" id="CHEBI:15377"/>
        <dbReference type="ChEBI" id="CHEBI:33384"/>
        <dbReference type="ChEBI" id="CHEBI:57912"/>
        <dbReference type="ChEBI" id="CHEBI:58866"/>
        <dbReference type="ChEBI" id="CHEBI:59776"/>
        <dbReference type="EC" id="4.2.1.20"/>
    </reaction>
</comment>
<comment type="cofactor">
    <cofactor evidence="1">
        <name>pyridoxal 5'-phosphate</name>
        <dbReference type="ChEBI" id="CHEBI:597326"/>
    </cofactor>
</comment>
<comment type="pathway">
    <text>Amino-acid biosynthesis; L-tryptophan biosynthesis; L-tryptophan from chorismate: step 5/5.</text>
</comment>
<comment type="subunit">
    <text evidence="1">Tetramer of two alpha and two beta chains.</text>
</comment>
<comment type="similarity">
    <text evidence="2">Belongs to the TrpB family.</text>
</comment>
<organism>
    <name type="scientific">Pyrococcus abyssi (strain GE5 / Orsay)</name>
    <dbReference type="NCBI Taxonomy" id="272844"/>
    <lineage>
        <taxon>Archaea</taxon>
        <taxon>Methanobacteriati</taxon>
        <taxon>Methanobacteriota</taxon>
        <taxon>Thermococci</taxon>
        <taxon>Thermococcales</taxon>
        <taxon>Thermococcaceae</taxon>
        <taxon>Pyrococcus</taxon>
    </lineage>
</organism>
<proteinExistence type="inferred from homology"/>